<reference key="1">
    <citation type="journal article" date="2000" name="Nucleic Acids Res.">
        <title>Genome sequences of Chlamydia trachomatis MoPn and Chlamydia pneumoniae AR39.</title>
        <authorList>
            <person name="Read T.D."/>
            <person name="Brunham R.C."/>
            <person name="Shen C."/>
            <person name="Gill S.R."/>
            <person name="Heidelberg J.F."/>
            <person name="White O."/>
            <person name="Hickey E.K."/>
            <person name="Peterson J.D."/>
            <person name="Utterback T.R."/>
            <person name="Berry K.J."/>
            <person name="Bass S."/>
            <person name="Linher K.D."/>
            <person name="Weidman J.F."/>
            <person name="Khouri H.M."/>
            <person name="Craven B."/>
            <person name="Bowman C."/>
            <person name="Dodson R.J."/>
            <person name="Gwinn M.L."/>
            <person name="Nelson W.C."/>
            <person name="DeBoy R.T."/>
            <person name="Kolonay J.F."/>
            <person name="McClarty G."/>
            <person name="Salzberg S.L."/>
            <person name="Eisen J.A."/>
            <person name="Fraser C.M."/>
        </authorList>
    </citation>
    <scope>NUCLEOTIDE SEQUENCE [LARGE SCALE GENOMIC DNA]</scope>
    <source>
        <strain>MoPn / Nigg</strain>
    </source>
</reference>
<keyword id="KW-0687">Ribonucleoprotein</keyword>
<keyword id="KW-0689">Ribosomal protein</keyword>
<keyword id="KW-0694">RNA-binding</keyword>
<keyword id="KW-0699">rRNA-binding</keyword>
<dbReference type="EMBL" id="AE002160">
    <property type="protein sequence ID" value="AAF39603.1"/>
    <property type="molecule type" value="Genomic_DNA"/>
</dbReference>
<dbReference type="PIR" id="H81663">
    <property type="entry name" value="H81663"/>
</dbReference>
<dbReference type="RefSeq" id="WP_010231597.1">
    <property type="nucleotide sequence ID" value="NZ_CP063055.1"/>
</dbReference>
<dbReference type="SMR" id="Q9PJM9"/>
<dbReference type="GeneID" id="1246167"/>
<dbReference type="KEGG" id="cmu:TC_0800"/>
<dbReference type="eggNOG" id="COG0256">
    <property type="taxonomic scope" value="Bacteria"/>
</dbReference>
<dbReference type="HOGENOM" id="CLU_098841_0_1_0"/>
<dbReference type="OrthoDB" id="9810939at2"/>
<dbReference type="Proteomes" id="UP000000800">
    <property type="component" value="Chromosome"/>
</dbReference>
<dbReference type="GO" id="GO:0022625">
    <property type="term" value="C:cytosolic large ribosomal subunit"/>
    <property type="evidence" value="ECO:0007669"/>
    <property type="project" value="TreeGrafter"/>
</dbReference>
<dbReference type="GO" id="GO:0008097">
    <property type="term" value="F:5S rRNA binding"/>
    <property type="evidence" value="ECO:0007669"/>
    <property type="project" value="TreeGrafter"/>
</dbReference>
<dbReference type="GO" id="GO:0003735">
    <property type="term" value="F:structural constituent of ribosome"/>
    <property type="evidence" value="ECO:0007669"/>
    <property type="project" value="InterPro"/>
</dbReference>
<dbReference type="GO" id="GO:0006412">
    <property type="term" value="P:translation"/>
    <property type="evidence" value="ECO:0007669"/>
    <property type="project" value="UniProtKB-UniRule"/>
</dbReference>
<dbReference type="CDD" id="cd00432">
    <property type="entry name" value="Ribosomal_L18_L5e"/>
    <property type="match status" value="1"/>
</dbReference>
<dbReference type="FunFam" id="3.30.420.100:FF:000001">
    <property type="entry name" value="50S ribosomal protein L18"/>
    <property type="match status" value="1"/>
</dbReference>
<dbReference type="Gene3D" id="3.30.420.100">
    <property type="match status" value="1"/>
</dbReference>
<dbReference type="HAMAP" id="MF_01337_B">
    <property type="entry name" value="Ribosomal_uL18_B"/>
    <property type="match status" value="1"/>
</dbReference>
<dbReference type="InterPro" id="IPR004389">
    <property type="entry name" value="Ribosomal_uL18_bac-type"/>
</dbReference>
<dbReference type="InterPro" id="IPR005484">
    <property type="entry name" value="Ribosomal_uL18_bac/euk"/>
</dbReference>
<dbReference type="NCBIfam" id="TIGR00060">
    <property type="entry name" value="L18_bact"/>
    <property type="match status" value="1"/>
</dbReference>
<dbReference type="PANTHER" id="PTHR12899">
    <property type="entry name" value="39S RIBOSOMAL PROTEIN L18, MITOCHONDRIAL"/>
    <property type="match status" value="1"/>
</dbReference>
<dbReference type="PANTHER" id="PTHR12899:SF3">
    <property type="entry name" value="LARGE RIBOSOMAL SUBUNIT PROTEIN UL18M"/>
    <property type="match status" value="1"/>
</dbReference>
<dbReference type="Pfam" id="PF00861">
    <property type="entry name" value="Ribosomal_L18p"/>
    <property type="match status" value="1"/>
</dbReference>
<dbReference type="SUPFAM" id="SSF53137">
    <property type="entry name" value="Translational machinery components"/>
    <property type="match status" value="1"/>
</dbReference>
<gene>
    <name evidence="1" type="primary">rplR</name>
    <name type="ordered locus">TC_0800</name>
</gene>
<protein>
    <recommendedName>
        <fullName evidence="1">Large ribosomal subunit protein uL18</fullName>
    </recommendedName>
    <alternativeName>
        <fullName evidence="2">50S ribosomal protein L18</fullName>
    </alternativeName>
</protein>
<comment type="function">
    <text evidence="1">This is one of the proteins that bind and probably mediate the attachment of the 5S RNA into the large ribosomal subunit, where it forms part of the central protuberance.</text>
</comment>
<comment type="subunit">
    <text evidence="1">Part of the 50S ribosomal subunit; part of the 5S rRNA/L5/L18/L25 subcomplex. Contacts the 5S and 23S rRNAs.</text>
</comment>
<comment type="similarity">
    <text evidence="1">Belongs to the universal ribosomal protein uL18 family.</text>
</comment>
<proteinExistence type="inferred from homology"/>
<evidence type="ECO:0000255" key="1">
    <source>
        <dbReference type="HAMAP-Rule" id="MF_01337"/>
    </source>
</evidence>
<evidence type="ECO:0000305" key="2"/>
<organism>
    <name type="scientific">Chlamydia muridarum (strain MoPn / Nigg)</name>
    <dbReference type="NCBI Taxonomy" id="243161"/>
    <lineage>
        <taxon>Bacteria</taxon>
        <taxon>Pseudomonadati</taxon>
        <taxon>Chlamydiota</taxon>
        <taxon>Chlamydiia</taxon>
        <taxon>Chlamydiales</taxon>
        <taxon>Chlamydiaceae</taxon>
        <taxon>Chlamydia/Chlamydophila group</taxon>
        <taxon>Chlamydia</taxon>
    </lineage>
</organism>
<feature type="chain" id="PRO_0000131243" description="Large ribosomal subunit protein uL18">
    <location>
        <begin position="1"/>
        <end position="123"/>
    </location>
</feature>
<name>RL18_CHLMU</name>
<sequence>MESSLYKKTSGKARRALRVRKALKGSSLKPRLSVVKTNKHIYVQLIDDVEGKTLASISTLAKISKTSGLTKKNQDNAKALGVKIAELGKSLQVDRIVFDRGAHKYHGVVAMVADGAREGGLQF</sequence>
<accession>Q9PJM9</accession>